<comment type="function">
    <text evidence="1">Membrane-anchoring subunit of succinate dehydrogenase (SDH).</text>
</comment>
<comment type="cofactor">
    <cofactor evidence="1">
        <name>heme</name>
        <dbReference type="ChEBI" id="CHEBI:30413"/>
    </cofactor>
    <text evidence="1">The heme is bound between the two transmembrane subunits.</text>
</comment>
<comment type="pathway">
    <text>Carbohydrate metabolism; tricarboxylic acid cycle.</text>
</comment>
<comment type="subunit">
    <text evidence="1">Part of an enzyme complex containing four subunits: a flavoprotein, an iron-sulfur protein, plus two membrane-anchoring proteins, SdhC and SdhD. The complex can form homotrimers (By similarity).</text>
</comment>
<comment type="subcellular location">
    <subcellularLocation>
        <location evidence="1">Cell inner membrane</location>
        <topology evidence="1">Multi-pass membrane protein</topology>
    </subcellularLocation>
</comment>
<reference key="1">
    <citation type="journal article" date="2002" name="Nucleic Acids Res.">
        <title>Genome sequence of Shigella flexneri 2a: insights into pathogenicity through comparison with genomes of Escherichia coli K12 and O157.</title>
        <authorList>
            <person name="Jin Q."/>
            <person name="Yuan Z."/>
            <person name="Xu J."/>
            <person name="Wang Y."/>
            <person name="Shen Y."/>
            <person name="Lu W."/>
            <person name="Wang J."/>
            <person name="Liu H."/>
            <person name="Yang J."/>
            <person name="Yang F."/>
            <person name="Zhang X."/>
            <person name="Zhang J."/>
            <person name="Yang G."/>
            <person name="Wu H."/>
            <person name="Qu D."/>
            <person name="Dong J."/>
            <person name="Sun L."/>
            <person name="Xue Y."/>
            <person name="Zhao A."/>
            <person name="Gao Y."/>
            <person name="Zhu J."/>
            <person name="Kan B."/>
            <person name="Ding K."/>
            <person name="Chen S."/>
            <person name="Cheng H."/>
            <person name="Yao Z."/>
            <person name="He B."/>
            <person name="Chen R."/>
            <person name="Ma D."/>
            <person name="Qiang B."/>
            <person name="Wen Y."/>
            <person name="Hou Y."/>
            <person name="Yu J."/>
        </authorList>
    </citation>
    <scope>NUCLEOTIDE SEQUENCE [LARGE SCALE GENOMIC DNA]</scope>
    <source>
        <strain>301 / Serotype 2a</strain>
    </source>
</reference>
<reference key="2">
    <citation type="journal article" date="2003" name="Infect. Immun.">
        <title>Complete genome sequence and comparative genomics of Shigella flexneri serotype 2a strain 2457T.</title>
        <authorList>
            <person name="Wei J."/>
            <person name="Goldberg M.B."/>
            <person name="Burland V."/>
            <person name="Venkatesan M.M."/>
            <person name="Deng W."/>
            <person name="Fournier G."/>
            <person name="Mayhew G.F."/>
            <person name="Plunkett G. III"/>
            <person name="Rose D.J."/>
            <person name="Darling A."/>
            <person name="Mau B."/>
            <person name="Perna N.T."/>
            <person name="Payne S.M."/>
            <person name="Runyen-Janecky L.J."/>
            <person name="Zhou S."/>
            <person name="Schwartz D.C."/>
            <person name="Blattner F.R."/>
        </authorList>
    </citation>
    <scope>NUCLEOTIDE SEQUENCE [LARGE SCALE GENOMIC DNA]</scope>
    <source>
        <strain>ATCC 700930 / 2457T / Serotype 2a</strain>
    </source>
</reference>
<sequence>MVSNASALGRNGVHDFILVRATAIVLTLYIIYMVGFFATSGELTYEVWIGFFASAFTKVFTLLALFSILIHAWIGMWQVLTDYVKPLALRLMLQLVIVVALVVYVIYGFVVVWGV</sequence>
<evidence type="ECO:0000250" key="1"/>
<name>DHSD_SHIFL</name>
<proteinExistence type="inferred from homology"/>
<protein>
    <recommendedName>
        <fullName>Succinate dehydrogenase hydrophobic membrane anchor subunit</fullName>
    </recommendedName>
</protein>
<organism>
    <name type="scientific">Shigella flexneri</name>
    <dbReference type="NCBI Taxonomy" id="623"/>
    <lineage>
        <taxon>Bacteria</taxon>
        <taxon>Pseudomonadati</taxon>
        <taxon>Pseudomonadota</taxon>
        <taxon>Gammaproteobacteria</taxon>
        <taxon>Enterobacterales</taxon>
        <taxon>Enterobacteriaceae</taxon>
        <taxon>Shigella</taxon>
    </lineage>
</organism>
<gene>
    <name type="primary">sdhD</name>
    <name type="ordered locus">SF0575</name>
    <name type="ordered locus">S0588</name>
</gene>
<dbReference type="EMBL" id="AE005674">
    <property type="protein sequence ID" value="AAN42219.1"/>
    <property type="molecule type" value="Genomic_DNA"/>
</dbReference>
<dbReference type="EMBL" id="AE014073">
    <property type="protein sequence ID" value="AAP16092.1"/>
    <property type="molecule type" value="Genomic_DNA"/>
</dbReference>
<dbReference type="RefSeq" id="NP_706512.1">
    <property type="nucleotide sequence ID" value="NC_004337.2"/>
</dbReference>
<dbReference type="RefSeq" id="WP_000254365.1">
    <property type="nucleotide sequence ID" value="NZ_WPGW01000035.1"/>
</dbReference>
<dbReference type="SMR" id="P0AC46"/>
<dbReference type="STRING" id="198214.SF0575"/>
<dbReference type="PaxDb" id="198214-SF0575"/>
<dbReference type="GeneID" id="1023493"/>
<dbReference type="GeneID" id="93776762"/>
<dbReference type="KEGG" id="sfl:SF0575"/>
<dbReference type="KEGG" id="sfx:S0588"/>
<dbReference type="PATRIC" id="fig|198214.7.peg.666"/>
<dbReference type="HOGENOM" id="CLU_151315_2_0_6"/>
<dbReference type="UniPathway" id="UPA00223"/>
<dbReference type="Proteomes" id="UP000001006">
    <property type="component" value="Chromosome"/>
</dbReference>
<dbReference type="Proteomes" id="UP000002673">
    <property type="component" value="Chromosome"/>
</dbReference>
<dbReference type="GO" id="GO:0005886">
    <property type="term" value="C:plasma membrane"/>
    <property type="evidence" value="ECO:0007669"/>
    <property type="project" value="UniProtKB-SubCell"/>
</dbReference>
<dbReference type="GO" id="GO:0009055">
    <property type="term" value="F:electron transfer activity"/>
    <property type="evidence" value="ECO:0007669"/>
    <property type="project" value="TreeGrafter"/>
</dbReference>
<dbReference type="GO" id="GO:0020037">
    <property type="term" value="F:heme binding"/>
    <property type="evidence" value="ECO:0007669"/>
    <property type="project" value="InterPro"/>
</dbReference>
<dbReference type="GO" id="GO:0046872">
    <property type="term" value="F:metal ion binding"/>
    <property type="evidence" value="ECO:0007669"/>
    <property type="project" value="UniProtKB-KW"/>
</dbReference>
<dbReference type="GO" id="GO:0017004">
    <property type="term" value="P:cytochrome complex assembly"/>
    <property type="evidence" value="ECO:0007669"/>
    <property type="project" value="TreeGrafter"/>
</dbReference>
<dbReference type="GO" id="GO:0006099">
    <property type="term" value="P:tricarboxylic acid cycle"/>
    <property type="evidence" value="ECO:0007669"/>
    <property type="project" value="UniProtKB-UniPathway"/>
</dbReference>
<dbReference type="CDD" id="cd03494">
    <property type="entry name" value="SQR_TypeC_SdhD"/>
    <property type="match status" value="1"/>
</dbReference>
<dbReference type="FunFam" id="1.20.1300.10:FF:000001">
    <property type="entry name" value="Succinate dehydrogenase hydrophobic membrane anchor subunit"/>
    <property type="match status" value="1"/>
</dbReference>
<dbReference type="Gene3D" id="1.20.1300.10">
    <property type="entry name" value="Fumarate reductase/succinate dehydrogenase, transmembrane subunit"/>
    <property type="match status" value="1"/>
</dbReference>
<dbReference type="InterPro" id="IPR034804">
    <property type="entry name" value="SQR/QFR_C/D"/>
</dbReference>
<dbReference type="InterPro" id="IPR014312">
    <property type="entry name" value="Succ_DH_anchor"/>
</dbReference>
<dbReference type="InterPro" id="IPR000701">
    <property type="entry name" value="SuccDH_FuR_B_TM-su"/>
</dbReference>
<dbReference type="NCBIfam" id="NF007022">
    <property type="entry name" value="PRK09488.1"/>
    <property type="match status" value="1"/>
</dbReference>
<dbReference type="NCBIfam" id="TIGR02968">
    <property type="entry name" value="succ_dehyd_anc"/>
    <property type="match status" value="1"/>
</dbReference>
<dbReference type="PANTHER" id="PTHR38689">
    <property type="entry name" value="SUCCINATE DEHYDROGENASE HYDROPHOBIC MEMBRANE ANCHOR SUBUNIT"/>
    <property type="match status" value="1"/>
</dbReference>
<dbReference type="PANTHER" id="PTHR38689:SF1">
    <property type="entry name" value="SUCCINATE DEHYDROGENASE HYDROPHOBIC MEMBRANE ANCHOR SUBUNIT"/>
    <property type="match status" value="1"/>
</dbReference>
<dbReference type="Pfam" id="PF01127">
    <property type="entry name" value="Sdh_cyt"/>
    <property type="match status" value="1"/>
</dbReference>
<dbReference type="PIRSF" id="PIRSF000169">
    <property type="entry name" value="SDH_D"/>
    <property type="match status" value="1"/>
</dbReference>
<dbReference type="SUPFAM" id="SSF81343">
    <property type="entry name" value="Fumarate reductase respiratory complex transmembrane subunits"/>
    <property type="match status" value="1"/>
</dbReference>
<accession>P0AC46</accession>
<accession>P10445</accession>
<feature type="chain" id="PRO_0000158675" description="Succinate dehydrogenase hydrophobic membrane anchor subunit">
    <location>
        <begin position="1"/>
        <end position="115"/>
    </location>
</feature>
<feature type="topological domain" description="Cytoplasmic" evidence="1">
    <location>
        <begin position="1"/>
        <end position="15"/>
    </location>
</feature>
<feature type="transmembrane region" description="Helical" evidence="1">
    <location>
        <begin position="16"/>
        <end position="36"/>
    </location>
</feature>
<feature type="topological domain" description="Periplasmic" evidence="1">
    <location>
        <begin position="37"/>
        <end position="58"/>
    </location>
</feature>
<feature type="transmembrane region" description="Helical" evidence="1">
    <location>
        <begin position="59"/>
        <end position="80"/>
    </location>
</feature>
<feature type="topological domain" description="Cytoplasmic" evidence="1">
    <location>
        <begin position="81"/>
        <end position="90"/>
    </location>
</feature>
<feature type="transmembrane region" description="Helical" evidence="1">
    <location>
        <begin position="91"/>
        <end position="115"/>
    </location>
</feature>
<feature type="binding site" description="axial binding residue" evidence="1">
    <location>
        <position position="71"/>
    </location>
    <ligand>
        <name>heme</name>
        <dbReference type="ChEBI" id="CHEBI:30413"/>
        <note>ligand shared with second transmembrane subunit</note>
    </ligand>
    <ligandPart>
        <name>Fe</name>
        <dbReference type="ChEBI" id="CHEBI:18248"/>
    </ligandPart>
</feature>
<feature type="binding site" evidence="1">
    <location>
        <position position="83"/>
    </location>
    <ligand>
        <name>a ubiquinone</name>
        <dbReference type="ChEBI" id="CHEBI:16389"/>
    </ligand>
</feature>
<keyword id="KW-0997">Cell inner membrane</keyword>
<keyword id="KW-1003">Cell membrane</keyword>
<keyword id="KW-0249">Electron transport</keyword>
<keyword id="KW-0349">Heme</keyword>
<keyword id="KW-0408">Iron</keyword>
<keyword id="KW-0472">Membrane</keyword>
<keyword id="KW-0479">Metal-binding</keyword>
<keyword id="KW-1185">Reference proteome</keyword>
<keyword id="KW-0812">Transmembrane</keyword>
<keyword id="KW-1133">Transmembrane helix</keyword>
<keyword id="KW-0813">Transport</keyword>
<keyword id="KW-0816">Tricarboxylic acid cycle</keyword>